<organism>
    <name type="scientific">Escherichia coli (strain SMS-3-5 / SECEC)</name>
    <dbReference type="NCBI Taxonomy" id="439855"/>
    <lineage>
        <taxon>Bacteria</taxon>
        <taxon>Pseudomonadati</taxon>
        <taxon>Pseudomonadota</taxon>
        <taxon>Gammaproteobacteria</taxon>
        <taxon>Enterobacterales</taxon>
        <taxon>Enterobacteriaceae</taxon>
        <taxon>Escherichia</taxon>
    </lineage>
</organism>
<gene>
    <name evidence="1" type="primary">epd</name>
    <name type="ordered locus">EcSMS35_3064</name>
</gene>
<protein>
    <recommendedName>
        <fullName evidence="1">D-erythrose-4-phosphate dehydrogenase</fullName>
        <shortName evidence="1">E4PDH</shortName>
        <ecNumber evidence="1">1.2.1.72</ecNumber>
    </recommendedName>
</protein>
<dbReference type="EC" id="1.2.1.72" evidence="1"/>
<dbReference type="EMBL" id="CP000970">
    <property type="protein sequence ID" value="ACB15704.1"/>
    <property type="molecule type" value="Genomic_DNA"/>
</dbReference>
<dbReference type="RefSeq" id="WP_000218480.1">
    <property type="nucleotide sequence ID" value="NC_010498.1"/>
</dbReference>
<dbReference type="SMR" id="B1LDD2"/>
<dbReference type="GeneID" id="93779071"/>
<dbReference type="KEGG" id="ecm:EcSMS35_3064"/>
<dbReference type="HOGENOM" id="CLU_030140_0_2_6"/>
<dbReference type="UniPathway" id="UPA00244">
    <property type="reaction ID" value="UER00309"/>
</dbReference>
<dbReference type="Proteomes" id="UP000007011">
    <property type="component" value="Chromosome"/>
</dbReference>
<dbReference type="GO" id="GO:0005737">
    <property type="term" value="C:cytoplasm"/>
    <property type="evidence" value="ECO:0007669"/>
    <property type="project" value="UniProtKB-SubCell"/>
</dbReference>
<dbReference type="GO" id="GO:0048001">
    <property type="term" value="F:erythrose-4-phosphate dehydrogenase activity"/>
    <property type="evidence" value="ECO:0007669"/>
    <property type="project" value="UniProtKB-UniRule"/>
</dbReference>
<dbReference type="GO" id="GO:0051287">
    <property type="term" value="F:NAD binding"/>
    <property type="evidence" value="ECO:0007669"/>
    <property type="project" value="InterPro"/>
</dbReference>
<dbReference type="GO" id="GO:0042823">
    <property type="term" value="P:pyridoxal phosphate biosynthetic process"/>
    <property type="evidence" value="ECO:0007669"/>
    <property type="project" value="UniProtKB-UniRule"/>
</dbReference>
<dbReference type="GO" id="GO:0008615">
    <property type="term" value="P:pyridoxine biosynthetic process"/>
    <property type="evidence" value="ECO:0007669"/>
    <property type="project" value="UniProtKB-UniRule"/>
</dbReference>
<dbReference type="CDD" id="cd23937">
    <property type="entry name" value="GAPDH_C_E4PDH"/>
    <property type="match status" value="1"/>
</dbReference>
<dbReference type="CDD" id="cd17892">
    <property type="entry name" value="GAPDH_N_E4PDH"/>
    <property type="match status" value="1"/>
</dbReference>
<dbReference type="FunFam" id="3.30.360.10:FF:000007">
    <property type="entry name" value="D-erythrose-4-phosphate dehydrogenase"/>
    <property type="match status" value="1"/>
</dbReference>
<dbReference type="FunFam" id="3.40.50.720:FF:000001">
    <property type="entry name" value="Glyceraldehyde-3-phosphate dehydrogenase"/>
    <property type="match status" value="1"/>
</dbReference>
<dbReference type="Gene3D" id="3.30.360.10">
    <property type="entry name" value="Dihydrodipicolinate Reductase, domain 2"/>
    <property type="match status" value="1"/>
</dbReference>
<dbReference type="Gene3D" id="3.40.50.720">
    <property type="entry name" value="NAD(P)-binding Rossmann-like Domain"/>
    <property type="match status" value="1"/>
</dbReference>
<dbReference type="HAMAP" id="MF_01640">
    <property type="entry name" value="E4P_dehydrog"/>
    <property type="match status" value="1"/>
</dbReference>
<dbReference type="InterPro" id="IPR006422">
    <property type="entry name" value="E4P_DH_bac"/>
</dbReference>
<dbReference type="InterPro" id="IPR020831">
    <property type="entry name" value="GlycerAld/Erythrose_P_DH"/>
</dbReference>
<dbReference type="InterPro" id="IPR020830">
    <property type="entry name" value="GlycerAld_3-P_DH_AS"/>
</dbReference>
<dbReference type="InterPro" id="IPR020829">
    <property type="entry name" value="GlycerAld_3-P_DH_cat"/>
</dbReference>
<dbReference type="InterPro" id="IPR020828">
    <property type="entry name" value="GlycerAld_3-P_DH_NAD(P)-bd"/>
</dbReference>
<dbReference type="InterPro" id="IPR036291">
    <property type="entry name" value="NAD(P)-bd_dom_sf"/>
</dbReference>
<dbReference type="NCBIfam" id="TIGR01532">
    <property type="entry name" value="E4PD_g-proteo"/>
    <property type="match status" value="1"/>
</dbReference>
<dbReference type="NCBIfam" id="NF010058">
    <property type="entry name" value="PRK13535.1"/>
    <property type="match status" value="1"/>
</dbReference>
<dbReference type="PANTHER" id="PTHR43148">
    <property type="entry name" value="GLYCERALDEHYDE-3-PHOSPHATE DEHYDROGENASE 2"/>
    <property type="match status" value="1"/>
</dbReference>
<dbReference type="Pfam" id="PF02800">
    <property type="entry name" value="Gp_dh_C"/>
    <property type="match status" value="1"/>
</dbReference>
<dbReference type="Pfam" id="PF00044">
    <property type="entry name" value="Gp_dh_N"/>
    <property type="match status" value="1"/>
</dbReference>
<dbReference type="PIRSF" id="PIRSF000149">
    <property type="entry name" value="GAP_DH"/>
    <property type="match status" value="1"/>
</dbReference>
<dbReference type="PRINTS" id="PR00078">
    <property type="entry name" value="G3PDHDRGNASE"/>
</dbReference>
<dbReference type="SMART" id="SM00846">
    <property type="entry name" value="Gp_dh_N"/>
    <property type="match status" value="1"/>
</dbReference>
<dbReference type="SUPFAM" id="SSF55347">
    <property type="entry name" value="Glyceraldehyde-3-phosphate dehydrogenase-like, C-terminal domain"/>
    <property type="match status" value="1"/>
</dbReference>
<dbReference type="SUPFAM" id="SSF51735">
    <property type="entry name" value="NAD(P)-binding Rossmann-fold domains"/>
    <property type="match status" value="1"/>
</dbReference>
<dbReference type="PROSITE" id="PS00071">
    <property type="entry name" value="GAPDH"/>
    <property type="match status" value="1"/>
</dbReference>
<sequence>MTVRVAINGFGRIGRNVVRALYESGRRAEITVVAINELADAAGMAHLLKYDTSHGRFAWEVRQERDQLFVGDDAIRVLHERSLQSLPWRELGVDVVLDCTGVYGSREHGEAHIAAGAKKVLFSHPGSNDLDATVVYGVNQDQLRAEHRIVSNASCTTNCIIPVIKLLDDAYGIESGTVTTIHSAMHDQQVIDAYHPDLRRTRAASQSIIPVDTKLAAGITRFFPQFNDRFEAIAVRVPTINVTAIDLSVTVKKPVKANEVNLLLQKAAQGAFHGIVDYTELPLVSVDFNHDPHSAIVDGTQTRVSGAHLIKTLVWCDNEWGFANRMLDTTLAMATVAFR</sequence>
<name>E4PD_ECOSM</name>
<proteinExistence type="inferred from homology"/>
<accession>B1LDD2</accession>
<reference key="1">
    <citation type="journal article" date="2008" name="J. Bacteriol.">
        <title>Insights into the environmental resistance gene pool from the genome sequence of the multidrug-resistant environmental isolate Escherichia coli SMS-3-5.</title>
        <authorList>
            <person name="Fricke W.F."/>
            <person name="Wright M.S."/>
            <person name="Lindell A.H."/>
            <person name="Harkins D.M."/>
            <person name="Baker-Austin C."/>
            <person name="Ravel J."/>
            <person name="Stepanauskas R."/>
        </authorList>
    </citation>
    <scope>NUCLEOTIDE SEQUENCE [LARGE SCALE GENOMIC DNA]</scope>
    <source>
        <strain>SMS-3-5 / SECEC</strain>
    </source>
</reference>
<feature type="chain" id="PRO_1000186827" description="D-erythrose-4-phosphate dehydrogenase">
    <location>
        <begin position="1"/>
        <end position="339"/>
    </location>
</feature>
<feature type="active site" description="Nucleophile" evidence="1">
    <location>
        <position position="155"/>
    </location>
</feature>
<feature type="binding site" evidence="1">
    <location>
        <begin position="12"/>
        <end position="13"/>
    </location>
    <ligand>
        <name>NAD(+)</name>
        <dbReference type="ChEBI" id="CHEBI:57540"/>
    </ligand>
</feature>
<feature type="binding site" evidence="1">
    <location>
        <position position="81"/>
    </location>
    <ligand>
        <name>NAD(+)</name>
        <dbReference type="ChEBI" id="CHEBI:57540"/>
    </ligand>
</feature>
<feature type="binding site" evidence="1">
    <location>
        <begin position="154"/>
        <end position="156"/>
    </location>
    <ligand>
        <name>substrate</name>
    </ligand>
</feature>
<feature type="binding site" evidence="1">
    <location>
        <position position="200"/>
    </location>
    <ligand>
        <name>substrate</name>
    </ligand>
</feature>
<feature type="binding site" evidence="1">
    <location>
        <begin position="213"/>
        <end position="214"/>
    </location>
    <ligand>
        <name>substrate</name>
    </ligand>
</feature>
<feature type="binding site" evidence="1">
    <location>
        <position position="236"/>
    </location>
    <ligand>
        <name>substrate</name>
    </ligand>
</feature>
<feature type="binding site" evidence="1">
    <location>
        <position position="318"/>
    </location>
    <ligand>
        <name>NAD(+)</name>
        <dbReference type="ChEBI" id="CHEBI:57540"/>
    </ligand>
</feature>
<feature type="site" description="Activates thiol group during catalysis" evidence="1">
    <location>
        <position position="182"/>
    </location>
</feature>
<comment type="function">
    <text evidence="1">Catalyzes the NAD-dependent conversion of D-erythrose 4-phosphate to 4-phosphoerythronate.</text>
</comment>
<comment type="catalytic activity">
    <reaction evidence="1">
        <text>D-erythrose 4-phosphate + NAD(+) + H2O = 4-phospho-D-erythronate + NADH + 2 H(+)</text>
        <dbReference type="Rhea" id="RHEA:12056"/>
        <dbReference type="ChEBI" id="CHEBI:15377"/>
        <dbReference type="ChEBI" id="CHEBI:15378"/>
        <dbReference type="ChEBI" id="CHEBI:16897"/>
        <dbReference type="ChEBI" id="CHEBI:57540"/>
        <dbReference type="ChEBI" id="CHEBI:57945"/>
        <dbReference type="ChEBI" id="CHEBI:58766"/>
        <dbReference type="EC" id="1.2.1.72"/>
    </reaction>
</comment>
<comment type="pathway">
    <text evidence="1">Cofactor biosynthesis; pyridoxine 5'-phosphate biosynthesis; pyridoxine 5'-phosphate from D-erythrose 4-phosphate: step 1/5.</text>
</comment>
<comment type="subunit">
    <text evidence="1">Homotetramer.</text>
</comment>
<comment type="subcellular location">
    <subcellularLocation>
        <location evidence="1">Cytoplasm</location>
    </subcellularLocation>
</comment>
<comment type="similarity">
    <text evidence="1">Belongs to the glyceraldehyde-3-phosphate dehydrogenase family. Epd subfamily.</text>
</comment>
<keyword id="KW-0963">Cytoplasm</keyword>
<keyword id="KW-0520">NAD</keyword>
<keyword id="KW-0560">Oxidoreductase</keyword>
<keyword id="KW-0664">Pyridoxine biosynthesis</keyword>
<evidence type="ECO:0000255" key="1">
    <source>
        <dbReference type="HAMAP-Rule" id="MF_01640"/>
    </source>
</evidence>